<reference key="1">
    <citation type="journal article" date="2006" name="BMC Genomics">
        <title>Complete genome sequence of Shigella flexneri 5b and comparison with Shigella flexneri 2a.</title>
        <authorList>
            <person name="Nie H."/>
            <person name="Yang F."/>
            <person name="Zhang X."/>
            <person name="Yang J."/>
            <person name="Chen L."/>
            <person name="Wang J."/>
            <person name="Xiong Z."/>
            <person name="Peng J."/>
            <person name="Sun L."/>
            <person name="Dong J."/>
            <person name="Xue Y."/>
            <person name="Xu X."/>
            <person name="Chen S."/>
            <person name="Yao Z."/>
            <person name="Shen Y."/>
            <person name="Jin Q."/>
        </authorList>
    </citation>
    <scope>NUCLEOTIDE SEQUENCE [LARGE SCALE GENOMIC DNA]</scope>
    <source>
        <strain>8401</strain>
    </source>
</reference>
<name>RL22_SHIF8</name>
<gene>
    <name evidence="1" type="primary">rplV</name>
    <name type="ordered locus">SFV_3335</name>
</gene>
<keyword id="KW-0687">Ribonucleoprotein</keyword>
<keyword id="KW-0689">Ribosomal protein</keyword>
<keyword id="KW-0694">RNA-binding</keyword>
<keyword id="KW-0699">rRNA-binding</keyword>
<comment type="function">
    <text evidence="1">This protein binds specifically to 23S rRNA; its binding is stimulated by other ribosomal proteins, e.g. L4, L17, and L20. It is important during the early stages of 50S assembly. It makes multiple contacts with different domains of the 23S rRNA in the assembled 50S subunit and ribosome (By similarity).</text>
</comment>
<comment type="function">
    <text evidence="1">The globular domain of the protein is located near the polypeptide exit tunnel on the outside of the subunit, while an extended beta-hairpin is found that lines the wall of the exit tunnel in the center of the 70S ribosome.</text>
</comment>
<comment type="subunit">
    <text evidence="1">Part of the 50S ribosomal subunit.</text>
</comment>
<comment type="similarity">
    <text evidence="1">Belongs to the universal ribosomal protein uL22 family.</text>
</comment>
<feature type="chain" id="PRO_1000052653" description="Large ribosomal subunit protein uL22">
    <location>
        <begin position="1"/>
        <end position="110"/>
    </location>
</feature>
<accession>Q0SZY7</accession>
<evidence type="ECO:0000255" key="1">
    <source>
        <dbReference type="HAMAP-Rule" id="MF_01331"/>
    </source>
</evidence>
<evidence type="ECO:0000305" key="2"/>
<protein>
    <recommendedName>
        <fullName evidence="1">Large ribosomal subunit protein uL22</fullName>
    </recommendedName>
    <alternativeName>
        <fullName evidence="2">50S ribosomal protein L22</fullName>
    </alternativeName>
</protein>
<organism>
    <name type="scientific">Shigella flexneri serotype 5b (strain 8401)</name>
    <dbReference type="NCBI Taxonomy" id="373384"/>
    <lineage>
        <taxon>Bacteria</taxon>
        <taxon>Pseudomonadati</taxon>
        <taxon>Pseudomonadota</taxon>
        <taxon>Gammaproteobacteria</taxon>
        <taxon>Enterobacterales</taxon>
        <taxon>Enterobacteriaceae</taxon>
        <taxon>Shigella</taxon>
    </lineage>
</organism>
<proteinExistence type="inferred from homology"/>
<sequence length="110" mass="12241">METIAKHRHARSSAQKVRLVADLIRGKKVSQALDILTYTNKKAAVQVKKVLESAIANAEHNDGADIDDLKVTKIFVDEGPSMKRIMPRAKGRADRILKRTSHITVVVSDR</sequence>
<dbReference type="EMBL" id="CP000266">
    <property type="protein sequence ID" value="ABF05378.1"/>
    <property type="molecule type" value="Genomic_DNA"/>
</dbReference>
<dbReference type="RefSeq" id="WP_000447531.1">
    <property type="nucleotide sequence ID" value="NC_008258.1"/>
</dbReference>
<dbReference type="SMR" id="Q0SZY7"/>
<dbReference type="KEGG" id="sfv:SFV_3335"/>
<dbReference type="HOGENOM" id="CLU_083987_3_3_6"/>
<dbReference type="Proteomes" id="UP000000659">
    <property type="component" value="Chromosome"/>
</dbReference>
<dbReference type="GO" id="GO:0022625">
    <property type="term" value="C:cytosolic large ribosomal subunit"/>
    <property type="evidence" value="ECO:0007669"/>
    <property type="project" value="TreeGrafter"/>
</dbReference>
<dbReference type="GO" id="GO:0019843">
    <property type="term" value="F:rRNA binding"/>
    <property type="evidence" value="ECO:0007669"/>
    <property type="project" value="UniProtKB-UniRule"/>
</dbReference>
<dbReference type="GO" id="GO:0003735">
    <property type="term" value="F:structural constituent of ribosome"/>
    <property type="evidence" value="ECO:0007669"/>
    <property type="project" value="InterPro"/>
</dbReference>
<dbReference type="GO" id="GO:0006412">
    <property type="term" value="P:translation"/>
    <property type="evidence" value="ECO:0007669"/>
    <property type="project" value="UniProtKB-UniRule"/>
</dbReference>
<dbReference type="CDD" id="cd00336">
    <property type="entry name" value="Ribosomal_L22"/>
    <property type="match status" value="1"/>
</dbReference>
<dbReference type="FunFam" id="3.90.470.10:FF:000001">
    <property type="entry name" value="50S ribosomal protein L22"/>
    <property type="match status" value="1"/>
</dbReference>
<dbReference type="Gene3D" id="3.90.470.10">
    <property type="entry name" value="Ribosomal protein L22/L17"/>
    <property type="match status" value="1"/>
</dbReference>
<dbReference type="HAMAP" id="MF_01331_B">
    <property type="entry name" value="Ribosomal_uL22_B"/>
    <property type="match status" value="1"/>
</dbReference>
<dbReference type="InterPro" id="IPR001063">
    <property type="entry name" value="Ribosomal_uL22"/>
</dbReference>
<dbReference type="InterPro" id="IPR005727">
    <property type="entry name" value="Ribosomal_uL22_bac/chlpt-type"/>
</dbReference>
<dbReference type="InterPro" id="IPR047867">
    <property type="entry name" value="Ribosomal_uL22_bac/org-type"/>
</dbReference>
<dbReference type="InterPro" id="IPR018260">
    <property type="entry name" value="Ribosomal_uL22_CS"/>
</dbReference>
<dbReference type="InterPro" id="IPR036394">
    <property type="entry name" value="Ribosomal_uL22_sf"/>
</dbReference>
<dbReference type="NCBIfam" id="TIGR01044">
    <property type="entry name" value="rplV_bact"/>
    <property type="match status" value="1"/>
</dbReference>
<dbReference type="PANTHER" id="PTHR13501">
    <property type="entry name" value="CHLOROPLAST 50S RIBOSOMAL PROTEIN L22-RELATED"/>
    <property type="match status" value="1"/>
</dbReference>
<dbReference type="PANTHER" id="PTHR13501:SF8">
    <property type="entry name" value="LARGE RIBOSOMAL SUBUNIT PROTEIN UL22M"/>
    <property type="match status" value="1"/>
</dbReference>
<dbReference type="Pfam" id="PF00237">
    <property type="entry name" value="Ribosomal_L22"/>
    <property type="match status" value="1"/>
</dbReference>
<dbReference type="SUPFAM" id="SSF54843">
    <property type="entry name" value="Ribosomal protein L22"/>
    <property type="match status" value="1"/>
</dbReference>
<dbReference type="PROSITE" id="PS00464">
    <property type="entry name" value="RIBOSOMAL_L22"/>
    <property type="match status" value="1"/>
</dbReference>